<protein>
    <recommendedName>
        <fullName evidence="1">Ribonuclease PH</fullName>
        <shortName evidence="1">RNase PH</shortName>
        <ecNumber evidence="1">2.7.7.56</ecNumber>
    </recommendedName>
    <alternativeName>
        <fullName evidence="1">tRNA nucleotidyltransferase</fullName>
    </alternativeName>
</protein>
<feature type="chain" id="PRO_0000139902" description="Ribonuclease PH">
    <location>
        <begin position="1"/>
        <end position="235"/>
    </location>
</feature>
<feature type="binding site" evidence="1">
    <location>
        <position position="86"/>
    </location>
    <ligand>
        <name>phosphate</name>
        <dbReference type="ChEBI" id="CHEBI:43474"/>
        <note>substrate</note>
    </ligand>
</feature>
<feature type="binding site" evidence="1">
    <location>
        <begin position="124"/>
        <end position="126"/>
    </location>
    <ligand>
        <name>phosphate</name>
        <dbReference type="ChEBI" id="CHEBI:43474"/>
        <note>substrate</note>
    </ligand>
</feature>
<comment type="function">
    <text evidence="1">Phosphorolytic 3'-5' exoribonuclease that plays an important role in tRNA 3'-end maturation. Removes nucleotide residues following the 3'-CCA terminus of tRNAs; can also add nucleotides to the ends of RNA molecules by using nucleoside diphosphates as substrates, but this may not be physiologically important. Probably plays a role in initiation of 16S rRNA degradation (leading to ribosome degradation) during starvation.</text>
</comment>
<comment type="catalytic activity">
    <reaction evidence="1">
        <text>tRNA(n+1) + phosphate = tRNA(n) + a ribonucleoside 5'-diphosphate</text>
        <dbReference type="Rhea" id="RHEA:10628"/>
        <dbReference type="Rhea" id="RHEA-COMP:17343"/>
        <dbReference type="Rhea" id="RHEA-COMP:17344"/>
        <dbReference type="ChEBI" id="CHEBI:43474"/>
        <dbReference type="ChEBI" id="CHEBI:57930"/>
        <dbReference type="ChEBI" id="CHEBI:173114"/>
        <dbReference type="EC" id="2.7.7.56"/>
    </reaction>
</comment>
<comment type="subunit">
    <text evidence="1">Homohexameric ring arranged as a trimer of dimers.</text>
</comment>
<comment type="similarity">
    <text evidence="1">Belongs to the RNase PH family.</text>
</comment>
<sequence>MRPSNREHDQLRPVTITRNFTNYAEGSVLVEFGQTKVICNASIVEGVPRFLKGKNQGWITAEYGMLPRATHSRTEREASKGKQGGRTLEIQRLIGRSLRACIDLKVLGENTITLDCDVIQADGGTRTAAITGSCVAMRDAIHWMVQREKIKKMPAFNYVAAVSVGIYRGQPVLDLDYAEDVLAETDMNVVMNEQGHFIEVQGTAEDNSFNREQLNSMLSLAEIGIPQLIEIQKNA</sequence>
<proteinExistence type="inferred from homology"/>
<reference key="1">
    <citation type="submission" date="1999-01" db="EMBL/GenBank/DDBJ databases">
        <title>Cloning and sequencing of the rph gene encoding RNase PH from Legionella pneumophila.</title>
        <authorList>
            <person name="Kim S.J."/>
            <person name="Choe Y.K."/>
        </authorList>
    </citation>
    <scope>NUCLEOTIDE SEQUENCE [GENOMIC DNA]</scope>
    <source>
        <strain>130b / Wadsworth / Serogroup 1</strain>
    </source>
</reference>
<gene>
    <name evidence="1" type="primary">rph</name>
</gene>
<dbReference type="EC" id="2.7.7.56" evidence="1"/>
<dbReference type="EMBL" id="AF120720">
    <property type="protein sequence ID" value="AAD28218.1"/>
    <property type="molecule type" value="Genomic_DNA"/>
</dbReference>
<dbReference type="RefSeq" id="WP_010947728.1">
    <property type="nucleotide sequence ID" value="NZ_UGOV01000002.1"/>
</dbReference>
<dbReference type="SMR" id="Q9X528"/>
<dbReference type="STRING" id="91892.BIZ52_09865"/>
<dbReference type="GeneID" id="57036006"/>
<dbReference type="eggNOG" id="COG0689">
    <property type="taxonomic scope" value="Bacteria"/>
</dbReference>
<dbReference type="OMA" id="RYNMAPF"/>
<dbReference type="GO" id="GO:0000175">
    <property type="term" value="F:3'-5'-RNA exonuclease activity"/>
    <property type="evidence" value="ECO:0007669"/>
    <property type="project" value="UniProtKB-UniRule"/>
</dbReference>
<dbReference type="GO" id="GO:0000049">
    <property type="term" value="F:tRNA binding"/>
    <property type="evidence" value="ECO:0007669"/>
    <property type="project" value="UniProtKB-UniRule"/>
</dbReference>
<dbReference type="GO" id="GO:0009022">
    <property type="term" value="F:tRNA nucleotidyltransferase activity"/>
    <property type="evidence" value="ECO:0007669"/>
    <property type="project" value="UniProtKB-UniRule"/>
</dbReference>
<dbReference type="GO" id="GO:0016075">
    <property type="term" value="P:rRNA catabolic process"/>
    <property type="evidence" value="ECO:0007669"/>
    <property type="project" value="UniProtKB-UniRule"/>
</dbReference>
<dbReference type="GO" id="GO:0006364">
    <property type="term" value="P:rRNA processing"/>
    <property type="evidence" value="ECO:0007669"/>
    <property type="project" value="UniProtKB-KW"/>
</dbReference>
<dbReference type="GO" id="GO:0008033">
    <property type="term" value="P:tRNA processing"/>
    <property type="evidence" value="ECO:0007669"/>
    <property type="project" value="UniProtKB-UniRule"/>
</dbReference>
<dbReference type="CDD" id="cd11362">
    <property type="entry name" value="RNase_PH_bact"/>
    <property type="match status" value="1"/>
</dbReference>
<dbReference type="FunFam" id="3.30.230.70:FF:000003">
    <property type="entry name" value="Ribonuclease PH"/>
    <property type="match status" value="1"/>
</dbReference>
<dbReference type="Gene3D" id="3.30.230.70">
    <property type="entry name" value="GHMP Kinase, N-terminal domain"/>
    <property type="match status" value="1"/>
</dbReference>
<dbReference type="HAMAP" id="MF_00564">
    <property type="entry name" value="RNase_PH"/>
    <property type="match status" value="1"/>
</dbReference>
<dbReference type="InterPro" id="IPR001247">
    <property type="entry name" value="ExoRNase_PH_dom1"/>
</dbReference>
<dbReference type="InterPro" id="IPR015847">
    <property type="entry name" value="ExoRNase_PH_dom2"/>
</dbReference>
<dbReference type="InterPro" id="IPR036345">
    <property type="entry name" value="ExoRNase_PH_dom2_sf"/>
</dbReference>
<dbReference type="InterPro" id="IPR027408">
    <property type="entry name" value="PNPase/RNase_PH_dom_sf"/>
</dbReference>
<dbReference type="InterPro" id="IPR020568">
    <property type="entry name" value="Ribosomal_Su5_D2-typ_SF"/>
</dbReference>
<dbReference type="InterPro" id="IPR050080">
    <property type="entry name" value="RNase_PH"/>
</dbReference>
<dbReference type="InterPro" id="IPR002381">
    <property type="entry name" value="RNase_PH_bac-type"/>
</dbReference>
<dbReference type="InterPro" id="IPR018336">
    <property type="entry name" value="RNase_PH_CS"/>
</dbReference>
<dbReference type="NCBIfam" id="TIGR01966">
    <property type="entry name" value="RNasePH"/>
    <property type="match status" value="1"/>
</dbReference>
<dbReference type="PANTHER" id="PTHR11953">
    <property type="entry name" value="EXOSOME COMPLEX COMPONENT"/>
    <property type="match status" value="1"/>
</dbReference>
<dbReference type="PANTHER" id="PTHR11953:SF0">
    <property type="entry name" value="EXOSOME COMPLEX COMPONENT RRP41"/>
    <property type="match status" value="1"/>
</dbReference>
<dbReference type="Pfam" id="PF01138">
    <property type="entry name" value="RNase_PH"/>
    <property type="match status" value="1"/>
</dbReference>
<dbReference type="Pfam" id="PF03725">
    <property type="entry name" value="RNase_PH_C"/>
    <property type="match status" value="1"/>
</dbReference>
<dbReference type="SUPFAM" id="SSF55666">
    <property type="entry name" value="Ribonuclease PH domain 2-like"/>
    <property type="match status" value="1"/>
</dbReference>
<dbReference type="SUPFAM" id="SSF54211">
    <property type="entry name" value="Ribosomal protein S5 domain 2-like"/>
    <property type="match status" value="1"/>
</dbReference>
<dbReference type="PROSITE" id="PS01277">
    <property type="entry name" value="RIBONUCLEASE_PH"/>
    <property type="match status" value="1"/>
</dbReference>
<organism>
    <name type="scientific">Legionella pneumophila</name>
    <dbReference type="NCBI Taxonomy" id="446"/>
    <lineage>
        <taxon>Bacteria</taxon>
        <taxon>Pseudomonadati</taxon>
        <taxon>Pseudomonadota</taxon>
        <taxon>Gammaproteobacteria</taxon>
        <taxon>Legionellales</taxon>
        <taxon>Legionellaceae</taxon>
        <taxon>Legionella</taxon>
    </lineage>
</organism>
<evidence type="ECO:0000255" key="1">
    <source>
        <dbReference type="HAMAP-Rule" id="MF_00564"/>
    </source>
</evidence>
<name>RNPH_LEGPN</name>
<accession>Q9X528</accession>
<keyword id="KW-0548">Nucleotidyltransferase</keyword>
<keyword id="KW-0694">RNA-binding</keyword>
<keyword id="KW-0698">rRNA processing</keyword>
<keyword id="KW-0808">Transferase</keyword>
<keyword id="KW-0819">tRNA processing</keyword>
<keyword id="KW-0820">tRNA-binding</keyword>